<accession>Q9NX76</accession>
<accession>Q6IAC4</accession>
<name>CKLF6_HUMAN</name>
<feature type="chain" id="PRO_0000186107" description="CKLF-like MARVEL transmembrane domain-containing protein 6">
    <location>
        <begin position="1"/>
        <end position="183"/>
    </location>
</feature>
<feature type="topological domain" description="Cytoplasmic" evidence="4">
    <location>
        <begin position="1"/>
        <end position="39"/>
    </location>
</feature>
<feature type="transmembrane region" description="Helical" evidence="1">
    <location>
        <begin position="40"/>
        <end position="60"/>
    </location>
</feature>
<feature type="topological domain" description="Extracellular" evidence="10">
    <location>
        <begin position="61"/>
        <end position="67"/>
    </location>
</feature>
<feature type="transmembrane region" description="Helical" evidence="1">
    <location>
        <begin position="68"/>
        <end position="88"/>
    </location>
</feature>
<feature type="topological domain" description="Cytoplasmic" evidence="10">
    <location>
        <begin position="89"/>
        <end position="106"/>
    </location>
</feature>
<feature type="transmembrane region" description="Helical" evidence="1">
    <location>
        <begin position="107"/>
        <end position="127"/>
    </location>
</feature>
<feature type="topological domain" description="Extracellular" evidence="10">
    <location>
        <begin position="128"/>
        <end position="134"/>
    </location>
</feature>
<feature type="transmembrane region" description="Helical" evidence="1">
    <location>
        <begin position="135"/>
        <end position="155"/>
    </location>
</feature>
<feature type="topological domain" description="Cytoplasmic" evidence="4">
    <location>
        <begin position="156"/>
        <end position="183"/>
    </location>
</feature>
<feature type="domain" description="MARVEL" evidence="2">
    <location>
        <begin position="33"/>
        <end position="160"/>
    </location>
</feature>
<feature type="modified residue" description="N-acetylmethionine" evidence="6 12 13 14 15">
    <location>
        <position position="1"/>
    </location>
</feature>
<feature type="modified residue" description="Phosphoserine" evidence="13">
    <location>
        <position position="8"/>
    </location>
</feature>
<feature type="modified residue" description="Phosphothreonine" evidence="16">
    <location>
        <position position="171"/>
    </location>
</feature>
<feature type="sequence variant" id="VAR_061998" description="In dbSNP:rs35574803.">
    <original>T</original>
    <variation>A</variation>
    <location>
        <position position="91"/>
    </location>
</feature>
<protein>
    <recommendedName>
        <fullName evidence="8">CKLF-like MARVEL transmembrane domain-containing protein 6</fullName>
    </recommendedName>
    <alternativeName>
        <fullName evidence="7">Chemokine-like factor superfamily member 6</fullName>
    </alternativeName>
</protein>
<organism>
    <name type="scientific">Homo sapiens</name>
    <name type="common">Human</name>
    <dbReference type="NCBI Taxonomy" id="9606"/>
    <lineage>
        <taxon>Eukaryota</taxon>
        <taxon>Metazoa</taxon>
        <taxon>Chordata</taxon>
        <taxon>Craniata</taxon>
        <taxon>Vertebrata</taxon>
        <taxon>Euteleostomi</taxon>
        <taxon>Mammalia</taxon>
        <taxon>Eutheria</taxon>
        <taxon>Euarchontoglires</taxon>
        <taxon>Primates</taxon>
        <taxon>Haplorrhini</taxon>
        <taxon>Catarrhini</taxon>
        <taxon>Hominidae</taxon>
        <taxon>Homo</taxon>
    </lineage>
</organism>
<proteinExistence type="evidence at protein level"/>
<keyword id="KW-0007">Acetylation</keyword>
<keyword id="KW-1003">Cell membrane</keyword>
<keyword id="KW-0903">Direct protein sequencing</keyword>
<keyword id="KW-0967">Endosome</keyword>
<keyword id="KW-0472">Membrane</keyword>
<keyword id="KW-0597">Phosphoprotein</keyword>
<keyword id="KW-1267">Proteomics identification</keyword>
<keyword id="KW-1185">Reference proteome</keyword>
<keyword id="KW-0812">Transmembrane</keyword>
<keyword id="KW-1133">Transmembrane helix</keyword>
<keyword id="KW-0813">Transport</keyword>
<dbReference type="EMBL" id="AF479261">
    <property type="protein sequence ID" value="AAN73039.1"/>
    <property type="molecule type" value="mRNA"/>
</dbReference>
<dbReference type="EMBL" id="AK000403">
    <property type="protein sequence ID" value="BAA91141.1"/>
    <property type="molecule type" value="mRNA"/>
</dbReference>
<dbReference type="EMBL" id="CR457231">
    <property type="protein sequence ID" value="CAG33512.1"/>
    <property type="molecule type" value="mRNA"/>
</dbReference>
<dbReference type="EMBL" id="CH471055">
    <property type="protein sequence ID" value="EAW64429.1"/>
    <property type="molecule type" value="Genomic_DNA"/>
</dbReference>
<dbReference type="EMBL" id="BC002797">
    <property type="protein sequence ID" value="AAH02797.1"/>
    <property type="molecule type" value="mRNA"/>
</dbReference>
<dbReference type="CCDS" id="CCDS2653.1"/>
<dbReference type="RefSeq" id="NP_060271.1">
    <property type="nucleotide sequence ID" value="NM_017801.3"/>
</dbReference>
<dbReference type="SMR" id="Q9NX76"/>
<dbReference type="BioGRID" id="120259">
    <property type="interactions" value="111"/>
</dbReference>
<dbReference type="CORUM" id="Q9NX76"/>
<dbReference type="FunCoup" id="Q9NX76">
    <property type="interactions" value="411"/>
</dbReference>
<dbReference type="IntAct" id="Q9NX76">
    <property type="interactions" value="78"/>
</dbReference>
<dbReference type="MINT" id="Q9NX76"/>
<dbReference type="STRING" id="9606.ENSP00000205636"/>
<dbReference type="TCDB" id="1.A.64.4.5">
    <property type="family name" value="the plasmolipin (plasmolipin) family"/>
</dbReference>
<dbReference type="GlyGen" id="Q9NX76">
    <property type="glycosylation" value="1 site, 1 O-linked glycan (1 site)"/>
</dbReference>
<dbReference type="iPTMnet" id="Q9NX76"/>
<dbReference type="PhosphoSitePlus" id="Q9NX76"/>
<dbReference type="SwissPalm" id="Q9NX76"/>
<dbReference type="BioMuta" id="CMTM6"/>
<dbReference type="DMDM" id="34922183"/>
<dbReference type="jPOST" id="Q9NX76"/>
<dbReference type="MassIVE" id="Q9NX76"/>
<dbReference type="PaxDb" id="9606-ENSP00000205636"/>
<dbReference type="PeptideAtlas" id="Q9NX76"/>
<dbReference type="ProteomicsDB" id="83052"/>
<dbReference type="Pumba" id="Q9NX76"/>
<dbReference type="TopDownProteomics" id="Q9NX76"/>
<dbReference type="Antibodypedia" id="27750">
    <property type="antibodies" value="135 antibodies from 23 providers"/>
</dbReference>
<dbReference type="DNASU" id="54918"/>
<dbReference type="Ensembl" id="ENST00000205636.4">
    <property type="protein sequence ID" value="ENSP00000205636.3"/>
    <property type="gene ID" value="ENSG00000091317.8"/>
</dbReference>
<dbReference type="GeneID" id="54918"/>
<dbReference type="KEGG" id="hsa:54918"/>
<dbReference type="MANE-Select" id="ENST00000205636.4">
    <property type="protein sequence ID" value="ENSP00000205636.3"/>
    <property type="RefSeq nucleotide sequence ID" value="NM_017801.3"/>
    <property type="RefSeq protein sequence ID" value="NP_060271.1"/>
</dbReference>
<dbReference type="UCSC" id="uc003cfa.2">
    <property type="organism name" value="human"/>
</dbReference>
<dbReference type="AGR" id="HGNC:19177"/>
<dbReference type="CTD" id="54918"/>
<dbReference type="DisGeNET" id="54918"/>
<dbReference type="GeneCards" id="CMTM6"/>
<dbReference type="HGNC" id="HGNC:19177">
    <property type="gene designation" value="CMTM6"/>
</dbReference>
<dbReference type="HPA" id="ENSG00000091317">
    <property type="expression patterns" value="Low tissue specificity"/>
</dbReference>
<dbReference type="MIM" id="607889">
    <property type="type" value="gene"/>
</dbReference>
<dbReference type="neXtProt" id="NX_Q9NX76"/>
<dbReference type="OpenTargets" id="ENSG00000091317"/>
<dbReference type="PharmGKB" id="PA38816"/>
<dbReference type="VEuPathDB" id="HostDB:ENSG00000091317"/>
<dbReference type="eggNOG" id="KOG4788">
    <property type="taxonomic scope" value="Eukaryota"/>
</dbReference>
<dbReference type="GeneTree" id="ENSGT00940000157911"/>
<dbReference type="HOGENOM" id="CLU_104458_1_0_1"/>
<dbReference type="InParanoid" id="Q9NX76"/>
<dbReference type="OMA" id="FIWKRRE"/>
<dbReference type="OrthoDB" id="10028364at2759"/>
<dbReference type="PAN-GO" id="Q9NX76">
    <property type="GO annotations" value="1 GO annotation based on evolutionary models"/>
</dbReference>
<dbReference type="PhylomeDB" id="Q9NX76"/>
<dbReference type="TreeFam" id="TF317387"/>
<dbReference type="PathwayCommons" id="Q9NX76"/>
<dbReference type="Reactome" id="R-HSA-6798695">
    <property type="pathway name" value="Neutrophil degranulation"/>
</dbReference>
<dbReference type="SignaLink" id="Q9NX76"/>
<dbReference type="SIGNOR" id="Q9NX76"/>
<dbReference type="BioGRID-ORCS" id="54918">
    <property type="hits" value="17 hits in 1157 CRISPR screens"/>
</dbReference>
<dbReference type="ChiTaRS" id="CMTM6">
    <property type="organism name" value="human"/>
</dbReference>
<dbReference type="GenomeRNAi" id="54918"/>
<dbReference type="Pharos" id="Q9NX76">
    <property type="development level" value="Tbio"/>
</dbReference>
<dbReference type="PRO" id="PR:Q9NX76"/>
<dbReference type="Proteomes" id="UP000005640">
    <property type="component" value="Chromosome 3"/>
</dbReference>
<dbReference type="RNAct" id="Q9NX76">
    <property type="molecule type" value="protein"/>
</dbReference>
<dbReference type="Bgee" id="ENSG00000091317">
    <property type="expression patterns" value="Expressed in bronchial epithelial cell and 209 other cell types or tissues"/>
</dbReference>
<dbReference type="GO" id="GO:0035577">
    <property type="term" value="C:azurophil granule membrane"/>
    <property type="evidence" value="ECO:0000304"/>
    <property type="project" value="Reactome"/>
</dbReference>
<dbReference type="GO" id="GO:0031901">
    <property type="term" value="C:early endosome membrane"/>
    <property type="evidence" value="ECO:0000314"/>
    <property type="project" value="UniProtKB"/>
</dbReference>
<dbReference type="GO" id="GO:0016020">
    <property type="term" value="C:membrane"/>
    <property type="evidence" value="ECO:0007005"/>
    <property type="project" value="UniProtKB"/>
</dbReference>
<dbReference type="GO" id="GO:0005886">
    <property type="term" value="C:plasma membrane"/>
    <property type="evidence" value="ECO:0000314"/>
    <property type="project" value="UniProtKB"/>
</dbReference>
<dbReference type="GO" id="GO:0055038">
    <property type="term" value="C:recycling endosome membrane"/>
    <property type="evidence" value="ECO:0000314"/>
    <property type="project" value="UniProtKB"/>
</dbReference>
<dbReference type="GO" id="GO:0035579">
    <property type="term" value="C:specific granule membrane"/>
    <property type="evidence" value="ECO:0000304"/>
    <property type="project" value="Reactome"/>
</dbReference>
<dbReference type="GO" id="GO:0032456">
    <property type="term" value="P:endocytic recycling"/>
    <property type="evidence" value="ECO:0000315"/>
    <property type="project" value="UniProtKB"/>
</dbReference>
<dbReference type="GO" id="GO:0015031">
    <property type="term" value="P:protein transport"/>
    <property type="evidence" value="ECO:0000315"/>
    <property type="project" value="UniProtKB"/>
</dbReference>
<dbReference type="GO" id="GO:0031647">
    <property type="term" value="P:regulation of protein stability"/>
    <property type="evidence" value="ECO:0000315"/>
    <property type="project" value="UniProtKB"/>
</dbReference>
<dbReference type="InterPro" id="IPR008253">
    <property type="entry name" value="Marvel"/>
</dbReference>
<dbReference type="InterPro" id="IPR050578">
    <property type="entry name" value="MARVEL-CKLF_proteins"/>
</dbReference>
<dbReference type="PANTHER" id="PTHR22776:SF25">
    <property type="entry name" value="CKLF-LIKE MARVEL TRANSMEMBRANE DOMAIN-CONTAINING PROTEIN 6"/>
    <property type="match status" value="1"/>
</dbReference>
<dbReference type="PANTHER" id="PTHR22776">
    <property type="entry name" value="MARVEL-CONTAINING POTENTIAL LIPID RAFT-ASSOCIATED PROTEIN"/>
    <property type="match status" value="1"/>
</dbReference>
<dbReference type="Pfam" id="PF01284">
    <property type="entry name" value="MARVEL"/>
    <property type="match status" value="1"/>
</dbReference>
<dbReference type="PROSITE" id="PS51225">
    <property type="entry name" value="MARVEL"/>
    <property type="match status" value="1"/>
</dbReference>
<gene>
    <name evidence="8 11" type="primary">CMTM6</name>
    <name evidence="7" type="synonym">CKLFSF6</name>
</gene>
<evidence type="ECO:0000255" key="1"/>
<evidence type="ECO:0000255" key="2">
    <source>
        <dbReference type="PROSITE-ProRule" id="PRU00581"/>
    </source>
</evidence>
<evidence type="ECO:0000269" key="3">
    <source>
    </source>
</evidence>
<evidence type="ECO:0000269" key="4">
    <source>
    </source>
</evidence>
<evidence type="ECO:0000269" key="5">
    <source>
    </source>
</evidence>
<evidence type="ECO:0000269" key="6">
    <source ref="6"/>
</evidence>
<evidence type="ECO:0000303" key="7">
    <source>
    </source>
</evidence>
<evidence type="ECO:0000303" key="8">
    <source>
    </source>
</evidence>
<evidence type="ECO:0000305" key="9"/>
<evidence type="ECO:0000305" key="10">
    <source>
    </source>
</evidence>
<evidence type="ECO:0000312" key="11">
    <source>
        <dbReference type="HGNC" id="HGNC:19177"/>
    </source>
</evidence>
<evidence type="ECO:0007744" key="12">
    <source>
    </source>
</evidence>
<evidence type="ECO:0007744" key="13">
    <source>
    </source>
</evidence>
<evidence type="ECO:0007744" key="14">
    <source>
    </source>
</evidence>
<evidence type="ECO:0007744" key="15">
    <source>
    </source>
</evidence>
<evidence type="ECO:0007744" key="16">
    <source>
    </source>
</evidence>
<reference key="1">
    <citation type="journal article" date="2003" name="Genomics">
        <title>Identification of eight genes encoding chemokine-like factor superfamily members 1-8 (CKLFSF1-8) by in silico cloning and experimental validation.</title>
        <authorList>
            <person name="Han W."/>
            <person name="Ding P."/>
            <person name="Xu M."/>
            <person name="Wang L."/>
            <person name="Rui M."/>
            <person name="Shi S."/>
            <person name="Liu Y."/>
            <person name="Zheng Y."/>
            <person name="Chen Y."/>
            <person name="Yang T."/>
            <person name="Ma D."/>
        </authorList>
    </citation>
    <scope>NUCLEOTIDE SEQUENCE [MRNA]</scope>
    <scope>TISSUE SPECIFICITY</scope>
    <source>
        <tissue>Prostate</tissue>
    </source>
</reference>
<reference key="2">
    <citation type="journal article" date="2004" name="Nat. Genet.">
        <title>Complete sequencing and characterization of 21,243 full-length human cDNAs.</title>
        <authorList>
            <person name="Ota T."/>
            <person name="Suzuki Y."/>
            <person name="Nishikawa T."/>
            <person name="Otsuki T."/>
            <person name="Sugiyama T."/>
            <person name="Irie R."/>
            <person name="Wakamatsu A."/>
            <person name="Hayashi K."/>
            <person name="Sato H."/>
            <person name="Nagai K."/>
            <person name="Kimura K."/>
            <person name="Makita H."/>
            <person name="Sekine M."/>
            <person name="Obayashi M."/>
            <person name="Nishi T."/>
            <person name="Shibahara T."/>
            <person name="Tanaka T."/>
            <person name="Ishii S."/>
            <person name="Yamamoto J."/>
            <person name="Saito K."/>
            <person name="Kawai Y."/>
            <person name="Isono Y."/>
            <person name="Nakamura Y."/>
            <person name="Nagahari K."/>
            <person name="Murakami K."/>
            <person name="Yasuda T."/>
            <person name="Iwayanagi T."/>
            <person name="Wagatsuma M."/>
            <person name="Shiratori A."/>
            <person name="Sudo H."/>
            <person name="Hosoiri T."/>
            <person name="Kaku Y."/>
            <person name="Kodaira H."/>
            <person name="Kondo H."/>
            <person name="Sugawara M."/>
            <person name="Takahashi M."/>
            <person name="Kanda K."/>
            <person name="Yokoi T."/>
            <person name="Furuya T."/>
            <person name="Kikkawa E."/>
            <person name="Omura Y."/>
            <person name="Abe K."/>
            <person name="Kamihara K."/>
            <person name="Katsuta N."/>
            <person name="Sato K."/>
            <person name="Tanikawa M."/>
            <person name="Yamazaki M."/>
            <person name="Ninomiya K."/>
            <person name="Ishibashi T."/>
            <person name="Yamashita H."/>
            <person name="Murakawa K."/>
            <person name="Fujimori K."/>
            <person name="Tanai H."/>
            <person name="Kimata M."/>
            <person name="Watanabe M."/>
            <person name="Hiraoka S."/>
            <person name="Chiba Y."/>
            <person name="Ishida S."/>
            <person name="Ono Y."/>
            <person name="Takiguchi S."/>
            <person name="Watanabe S."/>
            <person name="Yosida M."/>
            <person name="Hotuta T."/>
            <person name="Kusano J."/>
            <person name="Kanehori K."/>
            <person name="Takahashi-Fujii A."/>
            <person name="Hara H."/>
            <person name="Tanase T.-O."/>
            <person name="Nomura Y."/>
            <person name="Togiya S."/>
            <person name="Komai F."/>
            <person name="Hara R."/>
            <person name="Takeuchi K."/>
            <person name="Arita M."/>
            <person name="Imose N."/>
            <person name="Musashino K."/>
            <person name="Yuuki H."/>
            <person name="Oshima A."/>
            <person name="Sasaki N."/>
            <person name="Aotsuka S."/>
            <person name="Yoshikawa Y."/>
            <person name="Matsunawa H."/>
            <person name="Ichihara T."/>
            <person name="Shiohata N."/>
            <person name="Sano S."/>
            <person name="Moriya S."/>
            <person name="Momiyama H."/>
            <person name="Satoh N."/>
            <person name="Takami S."/>
            <person name="Terashima Y."/>
            <person name="Suzuki O."/>
            <person name="Nakagawa S."/>
            <person name="Senoh A."/>
            <person name="Mizoguchi H."/>
            <person name="Goto Y."/>
            <person name="Shimizu F."/>
            <person name="Wakebe H."/>
            <person name="Hishigaki H."/>
            <person name="Watanabe T."/>
            <person name="Sugiyama A."/>
            <person name="Takemoto M."/>
            <person name="Kawakami B."/>
            <person name="Yamazaki M."/>
            <person name="Watanabe K."/>
            <person name="Kumagai A."/>
            <person name="Itakura S."/>
            <person name="Fukuzumi Y."/>
            <person name="Fujimori Y."/>
            <person name="Komiyama M."/>
            <person name="Tashiro H."/>
            <person name="Tanigami A."/>
            <person name="Fujiwara T."/>
            <person name="Ono T."/>
            <person name="Yamada K."/>
            <person name="Fujii Y."/>
            <person name="Ozaki K."/>
            <person name="Hirao M."/>
            <person name="Ohmori Y."/>
            <person name="Kawabata A."/>
            <person name="Hikiji T."/>
            <person name="Kobatake N."/>
            <person name="Inagaki H."/>
            <person name="Ikema Y."/>
            <person name="Okamoto S."/>
            <person name="Okitani R."/>
            <person name="Kawakami T."/>
            <person name="Noguchi S."/>
            <person name="Itoh T."/>
            <person name="Shigeta K."/>
            <person name="Senba T."/>
            <person name="Matsumura K."/>
            <person name="Nakajima Y."/>
            <person name="Mizuno T."/>
            <person name="Morinaga M."/>
            <person name="Sasaki M."/>
            <person name="Togashi T."/>
            <person name="Oyama M."/>
            <person name="Hata H."/>
            <person name="Watanabe M."/>
            <person name="Komatsu T."/>
            <person name="Mizushima-Sugano J."/>
            <person name="Satoh T."/>
            <person name="Shirai Y."/>
            <person name="Takahashi Y."/>
            <person name="Nakagawa K."/>
            <person name="Okumura K."/>
            <person name="Nagase T."/>
            <person name="Nomura N."/>
            <person name="Kikuchi H."/>
            <person name="Masuho Y."/>
            <person name="Yamashita R."/>
            <person name="Nakai K."/>
            <person name="Yada T."/>
            <person name="Nakamura Y."/>
            <person name="Ohara O."/>
            <person name="Isogai T."/>
            <person name="Sugano S."/>
        </authorList>
    </citation>
    <scope>NUCLEOTIDE SEQUENCE [LARGE SCALE MRNA]</scope>
</reference>
<reference key="3">
    <citation type="submission" date="2004-06" db="EMBL/GenBank/DDBJ databases">
        <title>Cloning of human full open reading frames in Gateway(TM) system entry vector (pDONR201).</title>
        <authorList>
            <person name="Ebert L."/>
            <person name="Schick M."/>
            <person name="Neubert P."/>
            <person name="Schatten R."/>
            <person name="Henze S."/>
            <person name="Korn B."/>
        </authorList>
    </citation>
    <scope>NUCLEOTIDE SEQUENCE [LARGE SCALE MRNA]</scope>
</reference>
<reference key="4">
    <citation type="submission" date="2005-07" db="EMBL/GenBank/DDBJ databases">
        <authorList>
            <person name="Mural R.J."/>
            <person name="Istrail S."/>
            <person name="Sutton G.G."/>
            <person name="Florea L."/>
            <person name="Halpern A.L."/>
            <person name="Mobarry C.M."/>
            <person name="Lippert R."/>
            <person name="Walenz B."/>
            <person name="Shatkay H."/>
            <person name="Dew I."/>
            <person name="Miller J.R."/>
            <person name="Flanigan M.J."/>
            <person name="Edwards N.J."/>
            <person name="Bolanos R."/>
            <person name="Fasulo D."/>
            <person name="Halldorsson B.V."/>
            <person name="Hannenhalli S."/>
            <person name="Turner R."/>
            <person name="Yooseph S."/>
            <person name="Lu F."/>
            <person name="Nusskern D.R."/>
            <person name="Shue B.C."/>
            <person name="Zheng X.H."/>
            <person name="Zhong F."/>
            <person name="Delcher A.L."/>
            <person name="Huson D.H."/>
            <person name="Kravitz S.A."/>
            <person name="Mouchard L."/>
            <person name="Reinert K."/>
            <person name="Remington K.A."/>
            <person name="Clark A.G."/>
            <person name="Waterman M.S."/>
            <person name="Eichler E.E."/>
            <person name="Adams M.D."/>
            <person name="Hunkapiller M.W."/>
            <person name="Myers E.W."/>
            <person name="Venter J.C."/>
        </authorList>
    </citation>
    <scope>NUCLEOTIDE SEQUENCE [LARGE SCALE GENOMIC DNA]</scope>
</reference>
<reference key="5">
    <citation type="journal article" date="2004" name="Genome Res.">
        <title>The status, quality, and expansion of the NIH full-length cDNA project: the Mammalian Gene Collection (MGC).</title>
        <authorList>
            <consortium name="The MGC Project Team"/>
        </authorList>
    </citation>
    <scope>NUCLEOTIDE SEQUENCE [LARGE SCALE MRNA]</scope>
    <source>
        <tissue>Ovary</tissue>
    </source>
</reference>
<reference key="6">
    <citation type="submission" date="2005-11" db="UniProtKB">
        <authorList>
            <person name="Bienvenut W.V."/>
            <person name="Claeys D."/>
        </authorList>
    </citation>
    <scope>PROTEIN SEQUENCE OF 1-19; 23-33 AND 160-166</scope>
    <scope>ACETYLATION AT MET-1</scope>
    <scope>IDENTIFICATION BY MASS SPECTROMETRY</scope>
    <source>
        <tissue>Platelet</tissue>
    </source>
</reference>
<reference key="7">
    <citation type="journal article" date="2009" name="Anal. Chem.">
        <title>Lys-N and trypsin cover complementary parts of the phosphoproteome in a refined SCX-based approach.</title>
        <authorList>
            <person name="Gauci S."/>
            <person name="Helbig A.O."/>
            <person name="Slijper M."/>
            <person name="Krijgsveld J."/>
            <person name="Heck A.J."/>
            <person name="Mohammed S."/>
        </authorList>
    </citation>
    <scope>ACETYLATION [LARGE SCALE ANALYSIS] AT MET-1</scope>
    <scope>IDENTIFICATION BY MASS SPECTROMETRY [LARGE SCALE ANALYSIS]</scope>
</reference>
<reference key="8">
    <citation type="journal article" date="2010" name="Sci. Signal.">
        <title>Quantitative phosphoproteomics reveals widespread full phosphorylation site occupancy during mitosis.</title>
        <authorList>
            <person name="Olsen J.V."/>
            <person name="Vermeulen M."/>
            <person name="Santamaria A."/>
            <person name="Kumar C."/>
            <person name="Miller M.L."/>
            <person name="Jensen L.J."/>
            <person name="Gnad F."/>
            <person name="Cox J."/>
            <person name="Jensen T.S."/>
            <person name="Nigg E.A."/>
            <person name="Brunak S."/>
            <person name="Mann M."/>
        </authorList>
    </citation>
    <scope>ACETYLATION [LARGE SCALE ANALYSIS] AT MET-1</scope>
    <scope>PHOSPHORYLATION [LARGE SCALE ANALYSIS] AT SER-8</scope>
    <scope>IDENTIFICATION BY MASS SPECTROMETRY [LARGE SCALE ANALYSIS]</scope>
    <source>
        <tissue>Cervix carcinoma</tissue>
    </source>
</reference>
<reference key="9">
    <citation type="journal article" date="2011" name="BMC Syst. Biol.">
        <title>Initial characterization of the human central proteome.</title>
        <authorList>
            <person name="Burkard T.R."/>
            <person name="Planyavsky M."/>
            <person name="Kaupe I."/>
            <person name="Breitwieser F.P."/>
            <person name="Buerckstuemmer T."/>
            <person name="Bennett K.L."/>
            <person name="Superti-Furga G."/>
            <person name="Colinge J."/>
        </authorList>
    </citation>
    <scope>IDENTIFICATION BY MASS SPECTROMETRY [LARGE SCALE ANALYSIS]</scope>
</reference>
<reference key="10">
    <citation type="journal article" date="2012" name="Mol. Cell. Proteomics">
        <title>Comparative large-scale characterisation of plant vs. mammal proteins reveals similar and idiosyncratic N-alpha acetylation features.</title>
        <authorList>
            <person name="Bienvenut W.V."/>
            <person name="Sumpton D."/>
            <person name="Martinez A."/>
            <person name="Lilla S."/>
            <person name="Espagne C."/>
            <person name="Meinnel T."/>
            <person name="Giglione C."/>
        </authorList>
    </citation>
    <scope>ACETYLATION [LARGE SCALE ANALYSIS] AT MET-1</scope>
    <scope>IDENTIFICATION BY MASS SPECTROMETRY [LARGE SCALE ANALYSIS]</scope>
</reference>
<reference key="11">
    <citation type="journal article" date="2012" name="Proc. Natl. Acad. Sci. U.S.A.">
        <title>N-terminal acetylome analyses and functional insights of the N-terminal acetyltransferase NatB.</title>
        <authorList>
            <person name="Van Damme P."/>
            <person name="Lasa M."/>
            <person name="Polevoda B."/>
            <person name="Gazquez C."/>
            <person name="Elosegui-Artola A."/>
            <person name="Kim D.S."/>
            <person name="De Juan-Pardo E."/>
            <person name="Demeyer K."/>
            <person name="Hole K."/>
            <person name="Larrea E."/>
            <person name="Timmerman E."/>
            <person name="Prieto J."/>
            <person name="Arnesen T."/>
            <person name="Sherman F."/>
            <person name="Gevaert K."/>
            <person name="Aldabe R."/>
        </authorList>
    </citation>
    <scope>ACETYLATION [LARGE SCALE ANALYSIS] AT MET-1</scope>
    <scope>IDENTIFICATION BY MASS SPECTROMETRY [LARGE SCALE ANALYSIS]</scope>
</reference>
<reference key="12">
    <citation type="journal article" date="2013" name="J. Proteome Res.">
        <title>Toward a comprehensive characterization of a human cancer cell phosphoproteome.</title>
        <authorList>
            <person name="Zhou H."/>
            <person name="Di Palma S."/>
            <person name="Preisinger C."/>
            <person name="Peng M."/>
            <person name="Polat A.N."/>
            <person name="Heck A.J."/>
            <person name="Mohammed S."/>
        </authorList>
    </citation>
    <scope>PHOSPHORYLATION [LARGE SCALE ANALYSIS] AT THR-171</scope>
    <scope>IDENTIFICATION BY MASS SPECTROMETRY [LARGE SCALE ANALYSIS]</scope>
    <source>
        <tissue>Erythroleukemia</tissue>
    </source>
</reference>
<reference key="13">
    <citation type="journal article" date="2017" name="Nature">
        <title>CMTM6 maintains the expression of PD-L1 and regulates anti-tumour immunity.</title>
        <authorList>
            <person name="Burr M.L."/>
            <person name="Sparbier C.E."/>
            <person name="Chan Y.C."/>
            <person name="Williamson J.C."/>
            <person name="Woods K."/>
            <person name="Beavis P.A."/>
            <person name="Lam E.Y.N."/>
            <person name="Henderson M.A."/>
            <person name="Bell C.C."/>
            <person name="Stolzenburg S."/>
            <person name="Gilan O."/>
            <person name="Bloor S."/>
            <person name="Noori T."/>
            <person name="Morgens D.W."/>
            <person name="Bassik M.C."/>
            <person name="Neeson P.J."/>
            <person name="Behren A."/>
            <person name="Darcy P.K."/>
            <person name="Dawson S.J."/>
            <person name="Voskoboinik I."/>
            <person name="Trapani J.A."/>
            <person name="Cebon J."/>
            <person name="Lehner P.J."/>
            <person name="Dawson M.A."/>
        </authorList>
    </citation>
    <scope>FUNCTION</scope>
    <scope>SUBCELLULAR LOCATION</scope>
    <scope>INTERACTION WITH PD-L1/CD274; CD58; ARG1; ENO1 AND TMPO</scope>
    <scope>IDENTIFICATION BY MASS SPECTROMETRY</scope>
</reference>
<reference key="14">
    <citation type="journal article" date="2017" name="Nature">
        <title>Identification of CMTM6 and CMTM4 as PD-L1 protein regulators.</title>
        <authorList>
            <person name="Mezzadra R."/>
            <person name="Sun C."/>
            <person name="Jae L.T."/>
            <person name="Gomez-Eerland R."/>
            <person name="de Vries E."/>
            <person name="Wu W."/>
            <person name="Logtenberg M.E.W."/>
            <person name="Slagter M."/>
            <person name="Rozeman E.A."/>
            <person name="Hofland I."/>
            <person name="Broeks A."/>
            <person name="Horlings H.M."/>
            <person name="Wessels L.F.A."/>
            <person name="Blank C.U."/>
            <person name="Xiao Y."/>
            <person name="Heck A.J.R."/>
            <person name="Borst J."/>
            <person name="Brummelkamp T.R."/>
            <person name="Schumacher T.N.M."/>
        </authorList>
    </citation>
    <scope>FUNCTION</scope>
    <scope>SUBCELLULAR LOCATION</scope>
    <scope>INTERACTION WITH PD-L1/CD274 AND CMTM4</scope>
    <scope>IDENTIFICATION BY MASS SPECTROMETRY</scope>
    <scope>TOPOLOGY</scope>
</reference>
<sequence length="183" mass="20419">MENGAVYSPTTEEDPGPARGPRSGLAAYFFMGRLPLLRRVLKGLQLLLSLLAFICEEVVSQCTLCGGLYFFEFVSCSAFLLSLLILIVYCTPFYERVDTTKVKSSDFYITLGTGCVFLLASIIFVSTHDRTSAEIAAIVFGFIASFMFLLDFITMLYEKRQESQLRKPENTTRAEALTEPLNA</sequence>
<comment type="function">
    <text evidence="4 5">Master regulator of recycling and plasma membrane expression of PD-L1/CD274, an immune inhibitory ligand critical for immune tolerance to self and antitumor immunity. Associates with both constitutive and IFNG-induced PD-L1/CD274 at recycling endosomes, where it protects PD-L1/CD274 from being targeted for lysosomal degradation, likely by preventing its STUB1-mediated ubiquitination. May stabilize PD-L1/CD274 expression on antigen presenting cells and potentiates inhibitory signaling by PDCD1/CD279, its receptor on T-cells, ultimately triggering T-cell anergy.</text>
</comment>
<comment type="subunit">
    <text evidence="4 5">Interacts with PD-L1/CD274 (via transmembrane domain); the interaction is direct (PubMed:28813410, PubMed:28813417). Interacts with CMTM4 (PubMed:28813410). Interacts with CD58, ARG1, ENO1 and TMPO (PubMed:28813417).</text>
</comment>
<comment type="interaction">
    <interactant intactId="EBI-1054315">
        <id>Q9NX76</id>
    </interactant>
    <interactant intactId="EBI-3936819">
        <id>Q6Q788</id>
        <label>APOA5</label>
    </interactant>
    <organismsDiffer>false</organismsDiffer>
    <experiments>3</experiments>
</comment>
<comment type="interaction">
    <interactant intactId="EBI-1054315">
        <id>Q9NX76</id>
    </interactant>
    <interactant intactId="EBI-10284754">
        <id>Q96DR5</id>
        <label>BPIFA2</label>
    </interactant>
    <organismsDiffer>false</organismsDiffer>
    <experiments>3</experiments>
</comment>
<comment type="interaction">
    <interactant intactId="EBI-1054315">
        <id>Q9NX76</id>
    </interactant>
    <interactant intactId="EBI-4314390">
        <id>O95971</id>
        <label>CD160</label>
    </interactant>
    <organismsDiffer>false</organismsDiffer>
    <experiments>3</experiments>
</comment>
<comment type="interaction">
    <interactant intactId="EBI-1054315">
        <id>Q9NX76</id>
    </interactant>
    <interactant intactId="EBI-4314282">
        <id>Q9NZQ7</id>
        <label>CD274</label>
    </interactant>
    <organismsDiffer>false</organismsDiffer>
    <experiments>14</experiments>
</comment>
<comment type="interaction">
    <interactant intactId="EBI-1054315">
        <id>Q9NX76</id>
    </interactant>
    <interactant intactId="EBI-525714">
        <id>P25942</id>
        <label>CD40</label>
    </interactant>
    <organismsDiffer>false</organismsDiffer>
    <experiments>4</experiments>
</comment>
<comment type="interaction">
    <interactant intactId="EBI-1054315">
        <id>Q9NX76</id>
    </interactant>
    <interactant intactId="EBI-752069">
        <id>Q9H5X1</id>
        <label>CIAO2A</label>
    </interactant>
    <organismsDiffer>false</organismsDiffer>
    <experiments>3</experiments>
</comment>
<comment type="interaction">
    <interactant intactId="EBI-1054315">
        <id>Q9NX76</id>
    </interactant>
    <interactant intactId="EBI-745535">
        <id>Q8NI60</id>
        <label>COQ8A</label>
    </interactant>
    <organismsDiffer>false</organismsDiffer>
    <experiments>3</experiments>
</comment>
<comment type="interaction">
    <interactant intactId="EBI-1054315">
        <id>Q9NX76</id>
    </interactant>
    <interactant intactId="EBI-521451">
        <id>Q5VYK3</id>
        <label>ECPAS</label>
    </interactant>
    <organismsDiffer>false</organismsDiffer>
    <experiments>3</experiments>
</comment>
<comment type="interaction">
    <interactant intactId="EBI-1054315">
        <id>Q9NX76</id>
    </interactant>
    <interactant intactId="EBI-2339219">
        <id>Q08426</id>
        <label>EHHADH</label>
    </interactant>
    <organismsDiffer>false</organismsDiffer>
    <experiments>3</experiments>
</comment>
<comment type="interaction">
    <interactant intactId="EBI-1054315">
        <id>Q9NX76</id>
    </interactant>
    <interactant intactId="EBI-740987">
        <id>Q9NQG6</id>
        <label>MIEF1</label>
    </interactant>
    <organismsDiffer>false</organismsDiffer>
    <experiments>3</experiments>
</comment>
<comment type="interaction">
    <interactant intactId="EBI-1054315">
        <id>Q9NX76</id>
    </interactant>
    <interactant intactId="EBI-3232108">
        <id>Q8N0V3</id>
        <label>RBFA</label>
    </interactant>
    <organismsDiffer>false</organismsDiffer>
    <experiments>3</experiments>
</comment>
<comment type="interaction">
    <interactant intactId="EBI-1054315">
        <id>Q9NX76</id>
    </interactant>
    <interactant intactId="EBI-743526">
        <id>P38159</id>
        <label>RBMX</label>
    </interactant>
    <organismsDiffer>false</organismsDiffer>
    <experiments>3</experiments>
</comment>
<comment type="interaction">
    <interactant intactId="EBI-1054315">
        <id>Q9NX76</id>
    </interactant>
    <interactant intactId="EBI-6257312">
        <id>Q9BVN2</id>
        <label>RUSC1</label>
    </interactant>
    <organismsDiffer>false</organismsDiffer>
    <experiments>3</experiments>
</comment>
<comment type="interaction">
    <interactant intactId="EBI-1054315">
        <id>Q9NX76</id>
    </interactant>
    <interactant intactId="EBI-1053651">
        <id>P08579</id>
        <label>SNRPB2</label>
    </interactant>
    <organismsDiffer>false</organismsDiffer>
    <experiments>3</experiments>
</comment>
<comment type="interaction">
    <interactant intactId="EBI-1054315">
        <id>Q9NX76</id>
    </interactant>
    <interactant intactId="EBI-742688">
        <id>Q9NZD8</id>
        <label>SPG21</label>
    </interactant>
    <organismsDiffer>false</organismsDiffer>
    <experiments>3</experiments>
</comment>
<comment type="interaction">
    <interactant intactId="EBI-1054315">
        <id>Q9NX76</id>
    </interactant>
    <interactant intactId="EBI-710310">
        <id>Q15560</id>
        <label>TCEA2</label>
    </interactant>
    <organismsDiffer>false</organismsDiffer>
    <experiments>3</experiments>
</comment>
<comment type="interaction">
    <interactant intactId="EBI-1054315">
        <id>Q9NX76</id>
    </interactant>
    <interactant intactId="EBI-11603430">
        <id>Q6PL24</id>
        <label>TMED8</label>
    </interactant>
    <organismsDiffer>false</organismsDiffer>
    <experiments>3</experiments>
</comment>
<comment type="subcellular location">
    <subcellularLocation>
        <location evidence="4 5">Cell membrane</location>
        <topology evidence="1">Multi-pass membrane protein</topology>
    </subcellularLocation>
    <subcellularLocation>
        <location evidence="5">Early endosome membrane</location>
        <topology evidence="1">Multi-pass membrane protein</topology>
    </subcellularLocation>
    <subcellularLocation>
        <location evidence="5">Recycling endosome membrane</location>
        <topology evidence="1">Multi-pass membrane protein</topology>
    </subcellularLocation>
    <text evidence="5">Co-localizes with PD-L1/CD274 in the plasma membrane and in recycling endosomes.</text>
</comment>
<comment type="tissue specificity">
    <text evidence="3">Expressed in the leukocytes, placenta and testis.</text>
</comment>
<comment type="similarity">
    <text evidence="9">Belongs to the chemokine-like factor family.</text>
</comment>